<organism>
    <name type="scientific">Rattus norvegicus</name>
    <name type="common">Rat</name>
    <dbReference type="NCBI Taxonomy" id="10116"/>
    <lineage>
        <taxon>Eukaryota</taxon>
        <taxon>Metazoa</taxon>
        <taxon>Chordata</taxon>
        <taxon>Craniata</taxon>
        <taxon>Vertebrata</taxon>
        <taxon>Euteleostomi</taxon>
        <taxon>Mammalia</taxon>
        <taxon>Eutheria</taxon>
        <taxon>Euarchontoglires</taxon>
        <taxon>Glires</taxon>
        <taxon>Rodentia</taxon>
        <taxon>Myomorpha</taxon>
        <taxon>Muroidea</taxon>
        <taxon>Muridae</taxon>
        <taxon>Murinae</taxon>
        <taxon>Rattus</taxon>
    </lineage>
</organism>
<sequence>MAAGGAVAAAPECRLLPYALHKWSSFSSTYLPENILVDKPNDQSSRWSSESNYPPQYLILKLERPAIVQNITFGKYEKTHVCNLKKFKVFGGMNEENMTELLSSGLKNDYNKETFTLKHKIDEQMFPCRFIKIVPLLSWGPSFNFSIWYVELSGIDDPDIVQPCLNWYSKYREQEAIRLCLKHFRQHNYTEAFESLQKKTKIALEHPMLTDMHDKLVLKGDFDACEELIEKAVNDGLFNQYISQQEYKPRWSQIIPKSTKGDGEDNRPGMRGGHQMVIDVQTETVYLFGGWDGTQDLADFWAYSVKENQWTCISRDTEKENGPSARSCHKMCIDIQRRQIYTLGRYLDSSVRNSKSLKSDFYRYDIDTNTWMLLSEDTAADGGPKLVFDHQMCMDSEKHMIYTFGGRILTCNGSVDDSRASEPQFSGLFAFNCQCQTWKLLREDSCNAGPEDIQSRIGHCMLFHSKNRCLYVFGGQRSKTYLNDFFSYDVDSDHVDIISDGTKKDSGMVPMTGFTQRATIDPELNEIHVLSGLSKDKEKREENVRNSFWIYDIVRNSWSCVYKNDQAAKENLSKSLQEEEPCPRFAHQLVYDELHKVHYLFGGNPGKSCSPKMRLDDFWSLKLCRPSKDYLLRHCKYLIRKHRFEEKAQMDPLSALKYLQNDLYITVDHSDPEETKEFQLLASALFKSGSDFTALGFSDVDHTYAQRTQLFDTLVNFFPDSMTPPKGNLVDLITL</sequence>
<comment type="function">
    <text evidence="1 2 7">Component of the CTLH E3 ubiquitin-protein ligase complex that selectively accepts ubiquitin from UBE2H and mediates ubiquitination and subsequent proteasomal degradation of the transcription factor HBP1 (By similarity). Required for internalization of the GABA receptor GABRA1 from the cell membrane via endosomes and subsequent GABRA1 degradation (PubMed:25579817). Acts as a mediator of cell spreading and cytoskeletal responses to the extracellular matrix component THBS1 (By similarity).</text>
</comment>
<comment type="subunit">
    <text evidence="1 2 5 6 7">Homodimer; may form higher oligomers (PubMed:25579817). Identified in the CTLH complex that contains GID4, RANBP9 and/or RANBP10, MKLN1, MAEA, RMND5A (or alternatively its paralog RMND5B), GID8, ARMC8, WDR26 and YPEL5. Within this complex, MAEA, RMND5A (or alternatively its paralog RMND5B), GID8, WDR26, and RANBP9 and/or RANBP10 form the catalytic core, while GID4, MKLN1, ARMC8 and YPEL5 have ancillary roles (By similarity). Interacts with RANBP9 (By similarity). Part of a complex consisting of RANBP9, MKLN1 and GID8 (By similarity). Interacts with GABRA1 (PubMed:21482357). Interacts with the C-terminal tail of PTGER3 (PubMed:11006128).</text>
</comment>
<comment type="subcellular location">
    <subcellularLocation>
        <location evidence="5 7">Cytoplasm</location>
    </subcellularLocation>
    <subcellularLocation>
        <location evidence="1">Cell projection</location>
        <location evidence="1">Ruffle</location>
    </subcellularLocation>
    <subcellularLocation>
        <location evidence="1">Cytoplasm</location>
        <location evidence="1">Cell cortex</location>
    </subcellularLocation>
    <subcellularLocation>
        <location evidence="1">Synapse</location>
    </subcellularLocation>
    <subcellularLocation>
        <location evidence="1">Postsynapse</location>
    </subcellularLocation>
    <text evidence="1">Colocalizes with GABRA1 at synapses and in postsynaptic regions. Colocalizes with actin fibers in the cell cortex.</text>
</comment>
<comment type="domain">
    <text evidence="7">The LisH mediates head to tail dimerization.</text>
</comment>
<gene>
    <name type="primary">Mkln1</name>
    <name type="synonym">Msk</name>
</gene>
<evidence type="ECO:0000250" key="1">
    <source>
        <dbReference type="UniProtKB" id="O89050"/>
    </source>
</evidence>
<evidence type="ECO:0000250" key="2">
    <source>
        <dbReference type="UniProtKB" id="Q9UL63"/>
    </source>
</evidence>
<evidence type="ECO:0000255" key="3">
    <source>
        <dbReference type="PROSITE-ProRule" id="PRU00058"/>
    </source>
</evidence>
<evidence type="ECO:0000255" key="4">
    <source>
        <dbReference type="PROSITE-ProRule" id="PRU00126"/>
    </source>
</evidence>
<evidence type="ECO:0000269" key="5">
    <source>
    </source>
</evidence>
<evidence type="ECO:0000269" key="6">
    <source>
    </source>
</evidence>
<evidence type="ECO:0000269" key="7">
    <source>
    </source>
</evidence>
<evidence type="ECO:0007744" key="8">
    <source>
        <dbReference type="PDB" id="4OYU"/>
    </source>
</evidence>
<evidence type="ECO:0007829" key="9">
    <source>
        <dbReference type="PDB" id="4OYU"/>
    </source>
</evidence>
<name>MKLN1_RAT</name>
<feature type="initiator methionine" description="Removed" evidence="2">
    <location>
        <position position="1"/>
    </location>
</feature>
<feature type="chain" id="PRO_0000119140" description="Muskelin">
    <location>
        <begin position="2"/>
        <end position="735"/>
    </location>
</feature>
<feature type="domain" description="LisH" evidence="4">
    <location>
        <begin position="172"/>
        <end position="204"/>
    </location>
</feature>
<feature type="domain" description="CTLH" evidence="3">
    <location>
        <begin position="206"/>
        <end position="258"/>
    </location>
</feature>
<feature type="repeat" description="Kelch 1">
    <location>
        <begin position="284"/>
        <end position="330"/>
    </location>
</feature>
<feature type="repeat" description="Kelch 2">
    <location>
        <begin position="339"/>
        <end position="391"/>
    </location>
</feature>
<feature type="repeat" description="Kelch 3">
    <location>
        <begin position="400"/>
        <end position="458"/>
    </location>
</feature>
<feature type="repeat" description="Kelch 4">
    <location>
        <begin position="469"/>
        <end position="515"/>
    </location>
</feature>
<feature type="repeat" description="Kelch 5">
    <location>
        <begin position="526"/>
        <end position="578"/>
    </location>
</feature>
<feature type="repeat" description="Kelch 6">
    <location>
        <begin position="597"/>
        <end position="651"/>
    </location>
</feature>
<feature type="modified residue" description="N-acetylalanine" evidence="2">
    <location>
        <position position="2"/>
    </location>
</feature>
<feature type="mutagenesis site" description="Reduced head to tail dimerization." evidence="7">
    <original>Y</original>
    <variation>A</variation>
    <location>
        <position position="53"/>
    </location>
</feature>
<feature type="mutagenesis site" description="Strongly reduced head to tail dimerization." evidence="7">
    <original>F</original>
    <variation>A</variation>
    <location>
        <position position="143"/>
    </location>
</feature>
<feature type="mutagenesis site" description="Loss of head to tail dimerization. Causes loss of location in the cytosol and accumulation in the nucleus. No effect on GABA receptor internalization." evidence="7">
    <original>N</original>
    <variation>R</variation>
    <location>
        <position position="144"/>
    </location>
</feature>
<feature type="mutagenesis site" description="Reduced head to tail dimerization." evidence="7">
    <original>C</original>
    <variation>S</variation>
    <location>
        <position position="180"/>
    </location>
</feature>
<feature type="mutagenesis site" description="Reduced head to tail dimerization." evidence="7">
    <original>F</original>
    <variation>A</variation>
    <location>
        <position position="184"/>
    </location>
</feature>
<feature type="mutagenesis site" description="Strongly reduced head to tail dimerization and strongly reduced GABA receptor internalization; when associated with Q-196. Causes loss of location in the cytosol and accumulation in the nucleus; when associated with Q-196." evidence="7">
    <original>F</original>
    <variation>E</variation>
    <location>
        <position position="184"/>
    </location>
</feature>
<feature type="mutagenesis site" description="Reduced head to tail dimerization." evidence="7">
    <original>R</original>
    <variation>A</variation>
    <location>
        <position position="185"/>
    </location>
</feature>
<feature type="mutagenesis site" description="Strongly reduced head to tail dimerization and strongly reduced GABA receptor internalization; when associated with E-184. Causes loss of location in the cytosol and accumulation in the nucleus; when associated with E-184." evidence="7">
    <original>L</original>
    <variation>Q</variation>
    <location>
        <position position="196"/>
    </location>
</feature>
<feature type="strand" evidence="9">
    <location>
        <begin position="18"/>
        <end position="24"/>
    </location>
</feature>
<feature type="helix" evidence="9">
    <location>
        <begin position="32"/>
        <end position="36"/>
    </location>
</feature>
<feature type="strand" evidence="9">
    <location>
        <begin position="46"/>
        <end position="48"/>
    </location>
</feature>
<feature type="strand" evidence="9">
    <location>
        <begin position="52"/>
        <end position="54"/>
    </location>
</feature>
<feature type="strand" evidence="9">
    <location>
        <begin position="58"/>
        <end position="74"/>
    </location>
</feature>
<feature type="strand" evidence="9">
    <location>
        <begin position="83"/>
        <end position="97"/>
    </location>
</feature>
<feature type="strand" evidence="9">
    <location>
        <begin position="99"/>
        <end position="104"/>
    </location>
</feature>
<feature type="strand" evidence="9">
    <location>
        <begin position="108"/>
        <end position="110"/>
    </location>
</feature>
<feature type="strand" evidence="9">
    <location>
        <begin position="113"/>
        <end position="116"/>
    </location>
</feature>
<feature type="strand" evidence="9">
    <location>
        <begin position="128"/>
        <end position="140"/>
    </location>
</feature>
<feature type="strand" evidence="9">
    <location>
        <begin position="149"/>
        <end position="155"/>
    </location>
</feature>
<feature type="helix" evidence="9">
    <location>
        <begin position="158"/>
        <end position="186"/>
    </location>
</feature>
<protein>
    <recommendedName>
        <fullName>Muskelin</fullName>
    </recommendedName>
</protein>
<dbReference type="EMBL" id="AB046442">
    <property type="protein sequence ID" value="BAB21439.1"/>
    <property type="molecule type" value="mRNA"/>
</dbReference>
<dbReference type="RefSeq" id="NP_112649.1">
    <property type="nucleotide sequence ID" value="NM_031359.2"/>
</dbReference>
<dbReference type="PDB" id="4OYU">
    <property type="method" value="X-ray"/>
    <property type="resolution" value="1.80 A"/>
    <property type="chains" value="A/B=12-205"/>
</dbReference>
<dbReference type="PDBsum" id="4OYU"/>
<dbReference type="SMR" id="Q99PV3"/>
<dbReference type="CORUM" id="Q99PV3"/>
<dbReference type="FunCoup" id="Q99PV3">
    <property type="interactions" value="3932"/>
</dbReference>
<dbReference type="STRING" id="10116.ENSRNOP00000075084"/>
<dbReference type="PhosphoSitePlus" id="Q99PV3"/>
<dbReference type="PaxDb" id="10116-ENSRNOP00000016633"/>
<dbReference type="Ensembl" id="ENSRNOT00000081707.2">
    <property type="protein sequence ID" value="ENSRNOP00000075084.2"/>
    <property type="gene ID" value="ENSRNOG00000054514.2"/>
</dbReference>
<dbReference type="GeneID" id="83536"/>
<dbReference type="KEGG" id="rno:83536"/>
<dbReference type="UCSC" id="RGD:620076">
    <property type="organism name" value="rat"/>
</dbReference>
<dbReference type="AGR" id="RGD:620076"/>
<dbReference type="CTD" id="4289"/>
<dbReference type="RGD" id="620076">
    <property type="gene designation" value="Mkln1"/>
</dbReference>
<dbReference type="eggNOG" id="KOG2437">
    <property type="taxonomic scope" value="Eukaryota"/>
</dbReference>
<dbReference type="GeneTree" id="ENSGT00390000001702"/>
<dbReference type="InParanoid" id="Q99PV3"/>
<dbReference type="OMA" id="NKQDYKH"/>
<dbReference type="OrthoDB" id="3382at9989"/>
<dbReference type="PhylomeDB" id="Q99PV3"/>
<dbReference type="TreeFam" id="TF323659"/>
<dbReference type="Reactome" id="R-RNO-9861718">
    <property type="pathway name" value="Regulation of pyruvate metabolism"/>
</dbReference>
<dbReference type="EvolutionaryTrace" id="Q99PV3"/>
<dbReference type="PRO" id="PR:Q99PV3"/>
<dbReference type="Proteomes" id="UP000002494">
    <property type="component" value="Chromosome 4"/>
</dbReference>
<dbReference type="GO" id="GO:0005938">
    <property type="term" value="C:cell cortex"/>
    <property type="evidence" value="ECO:0000250"/>
    <property type="project" value="UniProtKB"/>
</dbReference>
<dbReference type="GO" id="GO:0005737">
    <property type="term" value="C:cytoplasm"/>
    <property type="evidence" value="ECO:0000266"/>
    <property type="project" value="RGD"/>
</dbReference>
<dbReference type="GO" id="GO:0005829">
    <property type="term" value="C:cytosol"/>
    <property type="evidence" value="ECO:0000314"/>
    <property type="project" value="UniProtKB"/>
</dbReference>
<dbReference type="GO" id="GO:0098982">
    <property type="term" value="C:GABA-ergic synapse"/>
    <property type="evidence" value="ECO:0000266"/>
    <property type="project" value="RGD"/>
</dbReference>
<dbReference type="GO" id="GO:0005654">
    <property type="term" value="C:nucleoplasm"/>
    <property type="evidence" value="ECO:0000266"/>
    <property type="project" value="RGD"/>
</dbReference>
<dbReference type="GO" id="GO:0098895">
    <property type="term" value="C:postsynaptic endosome membrane"/>
    <property type="evidence" value="ECO:0000266"/>
    <property type="project" value="RGD"/>
</dbReference>
<dbReference type="GO" id="GO:0099164">
    <property type="term" value="C:postsynaptic specialization membrane of symmetric synapse"/>
    <property type="evidence" value="ECO:0000266"/>
    <property type="project" value="RGD"/>
</dbReference>
<dbReference type="GO" id="GO:0001726">
    <property type="term" value="C:ruffle"/>
    <property type="evidence" value="ECO:0000250"/>
    <property type="project" value="UniProtKB"/>
</dbReference>
<dbReference type="GO" id="GO:0000151">
    <property type="term" value="C:ubiquitin ligase complex"/>
    <property type="evidence" value="ECO:0000266"/>
    <property type="project" value="RGD"/>
</dbReference>
<dbReference type="GO" id="GO:0042802">
    <property type="term" value="F:identical protein binding"/>
    <property type="evidence" value="ECO:0000266"/>
    <property type="project" value="RGD"/>
</dbReference>
<dbReference type="GO" id="GO:0042803">
    <property type="term" value="F:protein homodimerization activity"/>
    <property type="evidence" value="ECO:0000314"/>
    <property type="project" value="UniProtKB"/>
</dbReference>
<dbReference type="GO" id="GO:0030036">
    <property type="term" value="P:actin cytoskeleton organization"/>
    <property type="evidence" value="ECO:0000250"/>
    <property type="project" value="UniProtKB"/>
</dbReference>
<dbReference type="GO" id="GO:0007160">
    <property type="term" value="P:cell-matrix adhesion"/>
    <property type="evidence" value="ECO:0000250"/>
    <property type="project" value="UniProtKB"/>
</dbReference>
<dbReference type="GO" id="GO:0098968">
    <property type="term" value="P:neurotransmitter receptor transport postsynaptic membrane to endosome"/>
    <property type="evidence" value="ECO:0000266"/>
    <property type="project" value="RGD"/>
</dbReference>
<dbReference type="GO" id="GO:0008360">
    <property type="term" value="P:regulation of cell shape"/>
    <property type="evidence" value="ECO:0000250"/>
    <property type="project" value="UniProtKB"/>
</dbReference>
<dbReference type="GO" id="GO:0002090">
    <property type="term" value="P:regulation of receptor internalization"/>
    <property type="evidence" value="ECO:0000315"/>
    <property type="project" value="UniProtKB"/>
</dbReference>
<dbReference type="GO" id="GO:0099003">
    <property type="term" value="P:vesicle-mediated transport in synapse"/>
    <property type="evidence" value="ECO:0000266"/>
    <property type="project" value="RGD"/>
</dbReference>
<dbReference type="FunFam" id="2.120.10.80:FF:000018">
    <property type="entry name" value="Muskelin 1"/>
    <property type="match status" value="1"/>
</dbReference>
<dbReference type="FunFam" id="2.120.10.80:FF:000035">
    <property type="entry name" value="Muskelin 1"/>
    <property type="match status" value="1"/>
</dbReference>
<dbReference type="FunFam" id="2.60.120.260:FF:000066">
    <property type="entry name" value="Muskelin 1"/>
    <property type="match status" value="1"/>
</dbReference>
<dbReference type="Gene3D" id="2.60.120.260">
    <property type="entry name" value="Galactose-binding domain-like"/>
    <property type="match status" value="1"/>
</dbReference>
<dbReference type="Gene3D" id="2.120.10.80">
    <property type="entry name" value="Kelch-type beta propeller"/>
    <property type="match status" value="2"/>
</dbReference>
<dbReference type="InterPro" id="IPR056737">
    <property type="entry name" value="Beta-prop_ATRN-MKLN-like"/>
</dbReference>
<dbReference type="InterPro" id="IPR006595">
    <property type="entry name" value="CTLH_C"/>
</dbReference>
<dbReference type="InterPro" id="IPR052456">
    <property type="entry name" value="CTLH_complex_component"/>
</dbReference>
<dbReference type="InterPro" id="IPR011043">
    <property type="entry name" value="Gal_Oxase/kelch_b-propeller"/>
</dbReference>
<dbReference type="InterPro" id="IPR008979">
    <property type="entry name" value="Galactose-bd-like_sf"/>
</dbReference>
<dbReference type="InterPro" id="IPR015915">
    <property type="entry name" value="Kelch-typ_b-propeller"/>
</dbReference>
<dbReference type="InterPro" id="IPR006594">
    <property type="entry name" value="LisH"/>
</dbReference>
<dbReference type="InterPro" id="IPR010565">
    <property type="entry name" value="Muskelin_N"/>
</dbReference>
<dbReference type="PANTHER" id="PTHR15526">
    <property type="entry name" value="MUSKELIN"/>
    <property type="match status" value="1"/>
</dbReference>
<dbReference type="PANTHER" id="PTHR15526:SF5">
    <property type="entry name" value="MUSKELIN"/>
    <property type="match status" value="1"/>
</dbReference>
<dbReference type="Pfam" id="PF24981">
    <property type="entry name" value="Beta-prop_ATRN-LZTR1"/>
    <property type="match status" value="1"/>
</dbReference>
<dbReference type="Pfam" id="PF13415">
    <property type="entry name" value="Kelch_3"/>
    <property type="match status" value="1"/>
</dbReference>
<dbReference type="Pfam" id="PF06588">
    <property type="entry name" value="Muskelin_N"/>
    <property type="match status" value="1"/>
</dbReference>
<dbReference type="SMART" id="SM00667">
    <property type="entry name" value="LisH"/>
    <property type="match status" value="1"/>
</dbReference>
<dbReference type="SUPFAM" id="SSF50965">
    <property type="entry name" value="Galactose oxidase, central domain"/>
    <property type="match status" value="1"/>
</dbReference>
<dbReference type="SUPFAM" id="SSF49785">
    <property type="entry name" value="Galactose-binding domain-like"/>
    <property type="match status" value="1"/>
</dbReference>
<dbReference type="SUPFAM" id="SSF117281">
    <property type="entry name" value="Kelch motif"/>
    <property type="match status" value="1"/>
</dbReference>
<dbReference type="PROSITE" id="PS50897">
    <property type="entry name" value="CTLH"/>
    <property type="match status" value="1"/>
</dbReference>
<dbReference type="PROSITE" id="PS50896">
    <property type="entry name" value="LISH"/>
    <property type="match status" value="1"/>
</dbReference>
<reference key="1">
    <citation type="journal article" date="2000" name="Biochem. Biophys. Res. Commun.">
        <title>Receptor isoform-specific interaction of prostaglandin EP3 receptor with muskelin.</title>
        <authorList>
            <person name="Hasegawa H."/>
            <person name="Katoh H."/>
            <person name="Fujita H."/>
            <person name="Mori K."/>
            <person name="Negishi M."/>
        </authorList>
    </citation>
    <scope>NUCLEOTIDE SEQUENCE [MRNA]</scope>
    <scope>INTERACTION WITH PTGER3</scope>
    <scope>SUBCELLULAR LOCATION</scope>
</reference>
<reference key="2">
    <citation type="journal article" date="2011" name="Neuron">
        <title>Muskelin regulates actin filament- and microtubule-based GABA(A) receptor transport in neurons.</title>
        <authorList>
            <person name="Heisler F.F."/>
            <person name="Loebrich S."/>
            <person name="Pechmann Y."/>
            <person name="Maier N."/>
            <person name="Zivkovic A.R."/>
            <person name="Tokito M."/>
            <person name="Hausrat T.J."/>
            <person name="Schweizer M."/>
            <person name="Baehring R."/>
            <person name="Holzbaur E.L."/>
            <person name="Schmitz D."/>
            <person name="Kneussel M."/>
        </authorList>
    </citation>
    <scope>INTERACTION WITH GABRA1</scope>
</reference>
<reference evidence="8" key="3">
    <citation type="journal article" date="2015" name="Structure">
        <title>The LisH motif of muskelin is crucial for oligomerization and governs intracellular localization.</title>
        <authorList>
            <person name="Delto C.F."/>
            <person name="Heisler F.F."/>
            <person name="Kuper J."/>
            <person name="Sander B."/>
            <person name="Kneussel M."/>
            <person name="Schindelin H."/>
        </authorList>
    </citation>
    <scope>X-RAY CRYSTALLOGRAPHY (1.80 ANGSTROMS) OF 12-205</scope>
    <scope>FUNCTION</scope>
    <scope>SUBUNIT</scope>
    <scope>DOMAIN</scope>
    <scope>SUBCELLULAR LOCATION</scope>
    <scope>MUTAGENESIS OF TYR-53; PHE-143; ASN-144; CYS-180; PHE-184; ARG-185 AND LEU-196</scope>
</reference>
<accession>Q99PV3</accession>
<keyword id="KW-0002">3D-structure</keyword>
<keyword id="KW-0007">Acetylation</keyword>
<keyword id="KW-0966">Cell projection</keyword>
<keyword id="KW-0963">Cytoplasm</keyword>
<keyword id="KW-0880">Kelch repeat</keyword>
<keyword id="KW-1185">Reference proteome</keyword>
<keyword id="KW-0677">Repeat</keyword>
<keyword id="KW-0770">Synapse</keyword>
<proteinExistence type="evidence at protein level"/>